<protein>
    <recommendedName>
        <fullName>Probable xyloglucan glycosyltransferase 3</fullName>
        <ecNumber>2.4.1.-</ecNumber>
    </recommendedName>
    <alternativeName>
        <fullName>Cellulose synthase-like protein C3</fullName>
    </alternativeName>
    <alternativeName>
        <fullName>OsCslC3</fullName>
    </alternativeName>
</protein>
<keyword id="KW-0961">Cell wall biogenesis/degradation</keyword>
<keyword id="KW-0328">Glycosyltransferase</keyword>
<keyword id="KW-0333">Golgi apparatus</keyword>
<keyword id="KW-0472">Membrane</keyword>
<keyword id="KW-1185">Reference proteome</keyword>
<keyword id="KW-0808">Transferase</keyword>
<keyword id="KW-0812">Transmembrane</keyword>
<keyword id="KW-1133">Transmembrane helix</keyword>
<organism>
    <name type="scientific">Oryza sativa subsp. japonica</name>
    <name type="common">Rice</name>
    <dbReference type="NCBI Taxonomy" id="39947"/>
    <lineage>
        <taxon>Eukaryota</taxon>
        <taxon>Viridiplantae</taxon>
        <taxon>Streptophyta</taxon>
        <taxon>Embryophyta</taxon>
        <taxon>Tracheophyta</taxon>
        <taxon>Spermatophyta</taxon>
        <taxon>Magnoliopsida</taxon>
        <taxon>Liliopsida</taxon>
        <taxon>Poales</taxon>
        <taxon>Poaceae</taxon>
        <taxon>BOP clade</taxon>
        <taxon>Oryzoideae</taxon>
        <taxon>Oryzeae</taxon>
        <taxon>Oryzinae</taxon>
        <taxon>Oryza</taxon>
        <taxon>Oryza sativa</taxon>
    </lineage>
</organism>
<proteinExistence type="evidence at transcript level"/>
<accession>Q7PC69</accession>
<accession>Q0J6X2</accession>
<dbReference type="EC" id="2.4.1.-"/>
<dbReference type="EMBL" id="AP004013">
    <property type="protein sequence ID" value="BAC98512.1"/>
    <property type="molecule type" value="Genomic_DNA"/>
</dbReference>
<dbReference type="EMBL" id="AP004155">
    <property type="protein sequence ID" value="BAC98530.1"/>
    <property type="molecule type" value="Genomic_DNA"/>
</dbReference>
<dbReference type="EMBL" id="AP008214">
    <property type="protein sequence ID" value="BAF23293.1"/>
    <property type="status" value="ALT_INIT"/>
    <property type="molecule type" value="Genomic_DNA"/>
</dbReference>
<dbReference type="EMBL" id="AP014964">
    <property type="status" value="NOT_ANNOTATED_CDS"/>
    <property type="molecule type" value="Genomic_DNA"/>
</dbReference>
<dbReference type="EMBL" id="AK108045">
    <property type="status" value="NOT_ANNOTATED_CDS"/>
    <property type="molecule type" value="mRNA"/>
</dbReference>
<dbReference type="EMBL" id="BK000088">
    <property type="protein sequence ID" value="DAA01751.1"/>
    <property type="molecule type" value="Genomic_DNA"/>
</dbReference>
<dbReference type="RefSeq" id="XP_015648421.1">
    <property type="nucleotide sequence ID" value="XM_015792935.1"/>
</dbReference>
<dbReference type="RefSeq" id="XP_015648422.1">
    <property type="nucleotide sequence ID" value="XM_015792936.1"/>
</dbReference>
<dbReference type="SMR" id="Q7PC69"/>
<dbReference type="FunCoup" id="Q7PC69">
    <property type="interactions" value="26"/>
</dbReference>
<dbReference type="STRING" id="39947.Q7PC69"/>
<dbReference type="CAZy" id="GT2">
    <property type="family name" value="Glycosyltransferase Family 2"/>
</dbReference>
<dbReference type="PaxDb" id="39947-Q7PC69"/>
<dbReference type="KEGG" id="dosa:Os08g0253800"/>
<dbReference type="eggNOG" id="ENOG502QTBF">
    <property type="taxonomic scope" value="Eukaryota"/>
</dbReference>
<dbReference type="HOGENOM" id="CLU_012856_1_1_1"/>
<dbReference type="InParanoid" id="Q7PC69"/>
<dbReference type="OrthoDB" id="72851at2759"/>
<dbReference type="Proteomes" id="UP000000763">
    <property type="component" value="Chromosome 8"/>
</dbReference>
<dbReference type="Proteomes" id="UP000059680">
    <property type="component" value="Chromosome 8"/>
</dbReference>
<dbReference type="GO" id="GO:0005794">
    <property type="term" value="C:Golgi apparatus"/>
    <property type="evidence" value="ECO:0000318"/>
    <property type="project" value="GO_Central"/>
</dbReference>
<dbReference type="GO" id="GO:0000139">
    <property type="term" value="C:Golgi membrane"/>
    <property type="evidence" value="ECO:0007669"/>
    <property type="project" value="UniProtKB-SubCell"/>
</dbReference>
<dbReference type="GO" id="GO:0016757">
    <property type="term" value="F:glycosyltransferase activity"/>
    <property type="evidence" value="ECO:0000318"/>
    <property type="project" value="GO_Central"/>
</dbReference>
<dbReference type="GO" id="GO:0071555">
    <property type="term" value="P:cell wall organization"/>
    <property type="evidence" value="ECO:0007669"/>
    <property type="project" value="UniProtKB-KW"/>
</dbReference>
<dbReference type="FunFam" id="3.90.550.10:FF:000007">
    <property type="entry name" value="probable xyloglucan glycosyltransferase 5"/>
    <property type="match status" value="1"/>
</dbReference>
<dbReference type="Gene3D" id="3.90.550.10">
    <property type="entry name" value="Spore Coat Polysaccharide Biosynthesis Protein SpsA, Chain A"/>
    <property type="match status" value="1"/>
</dbReference>
<dbReference type="InterPro" id="IPR001173">
    <property type="entry name" value="Glyco_trans_2-like"/>
</dbReference>
<dbReference type="InterPro" id="IPR029044">
    <property type="entry name" value="Nucleotide-diphossugar_trans"/>
</dbReference>
<dbReference type="PANTHER" id="PTHR32044">
    <property type="entry name" value="GLUCOMANNAN 4-BETA-MANNOSYLTRANSFERASE 9"/>
    <property type="match status" value="1"/>
</dbReference>
<dbReference type="PANTHER" id="PTHR32044:SF69">
    <property type="entry name" value="XYLOGLUCAN GLYCOSYLTRANSFERASE 3-RELATED"/>
    <property type="match status" value="1"/>
</dbReference>
<dbReference type="Pfam" id="PF13632">
    <property type="entry name" value="Glyco_trans_2_3"/>
    <property type="match status" value="1"/>
</dbReference>
<dbReference type="SUPFAM" id="SSF53448">
    <property type="entry name" value="Nucleotide-diphospho-sugar transferases"/>
    <property type="match status" value="1"/>
</dbReference>
<reference key="1">
    <citation type="journal article" date="2005" name="Nature">
        <title>The map-based sequence of the rice genome.</title>
        <authorList>
            <consortium name="International rice genome sequencing project (IRGSP)"/>
        </authorList>
    </citation>
    <scope>NUCLEOTIDE SEQUENCE [LARGE SCALE GENOMIC DNA]</scope>
    <source>
        <strain>cv. Nipponbare</strain>
    </source>
</reference>
<reference key="2">
    <citation type="journal article" date="2008" name="Nucleic Acids Res.">
        <title>The rice annotation project database (RAP-DB): 2008 update.</title>
        <authorList>
            <consortium name="The rice annotation project (RAP)"/>
        </authorList>
    </citation>
    <scope>GENOME REANNOTATION</scope>
    <source>
        <strain>cv. Nipponbare</strain>
    </source>
</reference>
<reference key="3">
    <citation type="journal article" date="2013" name="Rice">
        <title>Improvement of the Oryza sativa Nipponbare reference genome using next generation sequence and optical map data.</title>
        <authorList>
            <person name="Kawahara Y."/>
            <person name="de la Bastide M."/>
            <person name="Hamilton J.P."/>
            <person name="Kanamori H."/>
            <person name="McCombie W.R."/>
            <person name="Ouyang S."/>
            <person name="Schwartz D.C."/>
            <person name="Tanaka T."/>
            <person name="Wu J."/>
            <person name="Zhou S."/>
            <person name="Childs K.L."/>
            <person name="Davidson R.M."/>
            <person name="Lin H."/>
            <person name="Quesada-Ocampo L."/>
            <person name="Vaillancourt B."/>
            <person name="Sakai H."/>
            <person name="Lee S.S."/>
            <person name="Kim J."/>
            <person name="Numa H."/>
            <person name="Itoh T."/>
            <person name="Buell C.R."/>
            <person name="Matsumoto T."/>
        </authorList>
    </citation>
    <scope>GENOME REANNOTATION</scope>
    <source>
        <strain>cv. Nipponbare</strain>
    </source>
</reference>
<reference key="4">
    <citation type="journal article" date="2003" name="Science">
        <title>Collection, mapping, and annotation of over 28,000 cDNA clones from japonica rice.</title>
        <authorList>
            <consortium name="The rice full-length cDNA consortium"/>
        </authorList>
    </citation>
    <scope>NUCLEOTIDE SEQUENCE [LARGE SCALE MRNA] OF 264-745</scope>
    <source>
        <strain>cv. Nipponbare</strain>
    </source>
</reference>
<reference key="5">
    <citation type="journal article" date="2002" name="Plant Physiol.">
        <title>Cellulose synthase-like genes of rice.</title>
        <authorList>
            <person name="Hazen S.P."/>
            <person name="Scott-Craig J.S."/>
            <person name="Walton J.D."/>
        </authorList>
    </citation>
    <scope>IDENTIFICATION</scope>
</reference>
<evidence type="ECO:0000250" key="1"/>
<evidence type="ECO:0000255" key="2"/>
<evidence type="ECO:0000305" key="3"/>
<sequence>MAPPPNTYSESWWGGKEERGTPVVVKMDNPYSLVEIDGPGMAAPSEKARGKNAKQLTWVLLLRAHRAVGCVAWLAAGFWAVLGAVNRRVRRSRDADAEPDAEASGRGRAMLRFLRGFLLLSLAMLAFETVAHLKGWHFPRSAAGLPEKYLRRLPEHLQHLPEHLRRHLPEHLRMPEKEEIEGWLHRAYVAWLAFRIDYIAWAIQKLSGFCIALFMVQSVDRLVLCLGCFWIKLRGIKPVADTSISNDDIEATAGDGGGYFPMVLIQMPMCNEKEVYETSISHVCQIDWPRERMLVQVLDDSDDETCQMLIKAEVTKWSQRGVNIIYRHRLNRTGYKAGNLKSAMSCDYVRDYEFVAIFDADFQPNPDFLKLTVPHFKGNPELGLVQARWSFVNKDENLLTRLQNINLCFHFEVEQQVNGVYLSFFGFNGTAGVWRIKALEDSGGWMERTTVEDMDIAVRAHLNGWKFIFLNDVKVLCELPESYQAYRKQQHRWHSGPMQLFRLCLPAVFKSKISTWKKANLVMLFFLLRKLILPFYSFTLFCVILPLTMFVPEAELPIWVICYVPVIMSVLNILPAPKSFPFVIPYLLFENTMSVTKFNAMVSGLFQLGSSYEWVVTKKAGRTSSESDILALAEAADADARPPPAKLHRGVSEGGLKEWAKLHKEQEDATAAAAAAAAPGTPVKKSKAAKAPNRIFKKELALAFLLLTAATRSLLSAQGLHFYFLLFQGVTFLAVGLDLIGEQVS</sequence>
<gene>
    <name type="primary">CSLC3</name>
    <name type="ordered locus">Os08g0253800</name>
    <name type="ordered locus">LOC_Os08g15420</name>
    <name type="ORF">OJ1112_D12.1</name>
    <name type="ORF">OJ1575_B01.13</name>
</gene>
<feature type="chain" id="PRO_0000319385" description="Probable xyloglucan glycosyltransferase 3">
    <location>
        <begin position="1"/>
        <end position="745"/>
    </location>
</feature>
<feature type="transmembrane region" description="Helical" evidence="2">
    <location>
        <begin position="116"/>
        <end position="136"/>
    </location>
</feature>
<feature type="transmembrane region" description="Helical" evidence="2">
    <location>
        <begin position="196"/>
        <end position="216"/>
    </location>
</feature>
<feature type="transmembrane region" description="Helical" evidence="2">
    <location>
        <begin position="531"/>
        <end position="551"/>
    </location>
</feature>
<feature type="transmembrane region" description="Helical" evidence="2">
    <location>
        <begin position="556"/>
        <end position="576"/>
    </location>
</feature>
<feature type="transmembrane region" description="Helical" evidence="2">
    <location>
        <begin position="695"/>
        <end position="715"/>
    </location>
</feature>
<feature type="transmembrane region" description="Helical" evidence="2">
    <location>
        <begin position="720"/>
        <end position="740"/>
    </location>
</feature>
<feature type="active site" evidence="2">
    <location>
        <position position="300"/>
    </location>
</feature>
<feature type="active site" evidence="2">
    <location>
        <position position="453"/>
    </location>
</feature>
<feature type="binding site" evidence="2">
    <location>
        <position position="359"/>
    </location>
    <ligand>
        <name>substrate</name>
    </ligand>
</feature>
<feature type="binding site" evidence="2">
    <location>
        <position position="361"/>
    </location>
    <ligand>
        <name>substrate</name>
    </ligand>
</feature>
<name>CSLC3_ORYSJ</name>
<comment type="function">
    <text evidence="1">Probable beta-1,4-glucan synthase rather involved in the synthesis of the xyloglucan backbone than cellulose. Seems to work simultaneously with xyloglucan 6-xylosyltransferase. Xyloglucan is a noncellulosic polysaccharides of plant cell wall and consists of a glucan backbone substituted by xylose, galactose and fucose (By similarity).</text>
</comment>
<comment type="subcellular location">
    <subcellularLocation>
        <location evidence="3">Golgi apparatus membrane</location>
        <topology evidence="3">Multi-pass membrane protein</topology>
    </subcellularLocation>
</comment>
<comment type="similarity">
    <text evidence="3">Belongs to the glycosyltransferase 2 family. Plant cellulose synthase-like C subfamily.</text>
</comment>
<comment type="sequence caution" evidence="3">
    <conflict type="erroneous initiation">
        <sequence resource="EMBL-CDS" id="BAF23293"/>
    </conflict>
</comment>